<accession>Q72IF6</accession>
<reference key="1">
    <citation type="journal article" date="2004" name="Nat. Biotechnol.">
        <title>The genome sequence of the extreme thermophile Thermus thermophilus.</title>
        <authorList>
            <person name="Henne A."/>
            <person name="Brueggemann H."/>
            <person name="Raasch C."/>
            <person name="Wiezer A."/>
            <person name="Hartsch T."/>
            <person name="Liesegang H."/>
            <person name="Johann A."/>
            <person name="Lienard T."/>
            <person name="Gohl O."/>
            <person name="Martinez-Arias R."/>
            <person name="Jacobi C."/>
            <person name="Starkuviene V."/>
            <person name="Schlenczeck S."/>
            <person name="Dencker S."/>
            <person name="Huber R."/>
            <person name="Klenk H.-P."/>
            <person name="Kramer W."/>
            <person name="Merkl R."/>
            <person name="Gottschalk G."/>
            <person name="Fritz H.-J."/>
        </authorList>
    </citation>
    <scope>NUCLEOTIDE SEQUENCE [LARGE SCALE GENOMIC DNA]</scope>
    <source>
        <strain>ATCC BAA-163 / DSM 7039 / HB27</strain>
    </source>
</reference>
<keyword id="KW-0067">ATP-binding</keyword>
<keyword id="KW-0963">Cytoplasm</keyword>
<keyword id="KW-0436">Ligase</keyword>
<keyword id="KW-0479">Metal-binding</keyword>
<keyword id="KW-0547">Nucleotide-binding</keyword>
<keyword id="KW-0819">tRNA processing</keyword>
<keyword id="KW-0862">Zinc</keyword>
<feature type="chain" id="PRO_0000181792" description="tRNA(Ile)-lysidine synthase">
    <location>
        <begin position="1"/>
        <end position="507"/>
    </location>
</feature>
<feature type="domain" description="CMP/dCMP-type deaminase" evidence="3">
    <location>
        <begin position="370"/>
        <end position="500"/>
    </location>
</feature>
<feature type="binding site" evidence="2">
    <location>
        <begin position="24"/>
        <end position="29"/>
    </location>
    <ligand>
        <name>ATP</name>
        <dbReference type="ChEBI" id="CHEBI:30616"/>
    </ligand>
</feature>
<feature type="binding site" evidence="1">
    <location>
        <position position="420"/>
    </location>
    <ligand>
        <name>Zn(2+)</name>
        <dbReference type="ChEBI" id="CHEBI:29105"/>
        <note>catalytic</note>
    </ligand>
</feature>
<feature type="binding site" evidence="1">
    <location>
        <position position="445"/>
    </location>
    <ligand>
        <name>Zn(2+)</name>
        <dbReference type="ChEBI" id="CHEBI:29105"/>
        <note>catalytic</note>
    </ligand>
</feature>
<feature type="binding site" evidence="1">
    <location>
        <position position="448"/>
    </location>
    <ligand>
        <name>Zn(2+)</name>
        <dbReference type="ChEBI" id="CHEBI:29105"/>
        <note>catalytic</note>
    </ligand>
</feature>
<sequence length="507" mass="56281">MDVPAFRERLLRLAPKDPLVLAVSGGGDSVALALLVKEAGRQAVVAHLDHGLRPESPLDQAFVRALAERLGFPFFTERVEVARIAQARGENLEAVAREVRYAFLHRVAREVGARAILTAHTLDDQAETVLLQLLQGTARATGIREREGIVVRPLLAHTREELRAYLRARGEAWREDPTNQDPALDRNFLRLFVFPLLEERFPAAKRALARFAEARAEEEGVLERQAEARLLPDPRFFVPAFRAAPLLEAPLAVRRRALRRLLEKLGLRPEARLVLLLEEALRGRPQTLPGGVLARRKGGTLFLLPPRPRLPLPPGFRRPAPGDYLERPSGRKRLVDFLAEKGVPRELKPLWPVRAEGSRVVEVLGLYPPPPEEAHMAEALAEAASAFREGEVPVGAVLVLPGRVLRAHNRVEGLRDPTAHAEMLLLREAGPEARGGRLYVTLEPCLMCHHALAQAGVEVVYGAENLKEGALTRFGLPTRARGGVRERECAKLLRDFFARLREGCRSG</sequence>
<gene>
    <name type="primary">tilS</name>
    <name type="ordered locus">TT_C1176</name>
</gene>
<protein>
    <recommendedName>
        <fullName>tRNA(Ile)-lysidine synthase</fullName>
        <ecNumber>6.3.4.19</ecNumber>
    </recommendedName>
    <alternativeName>
        <fullName>tRNA(Ile)-2-lysyl-cytidine synthase</fullName>
    </alternativeName>
    <alternativeName>
        <fullName>tRNA(Ile)-lysidine synthetase</fullName>
    </alternativeName>
</protein>
<proteinExistence type="inferred from homology"/>
<name>TILS_THET2</name>
<comment type="function">
    <text evidence="1">Ligates lysine onto the cytidine present at position 34 of the AUA codon-specific tRNA(Ile) that contains the anticodon CAU, in an ATP-dependent manner. Cytidine is converted to lysidine, thus changing the amino acid specificity of the tRNA from methionine to isoleucine (By similarity).</text>
</comment>
<comment type="catalytic activity">
    <reaction>
        <text>cytidine(34) in tRNA(Ile2) + L-lysine + ATP = lysidine(34) in tRNA(Ile2) + AMP + diphosphate + H(+)</text>
        <dbReference type="Rhea" id="RHEA:43744"/>
        <dbReference type="Rhea" id="RHEA-COMP:10625"/>
        <dbReference type="Rhea" id="RHEA-COMP:10670"/>
        <dbReference type="ChEBI" id="CHEBI:15378"/>
        <dbReference type="ChEBI" id="CHEBI:30616"/>
        <dbReference type="ChEBI" id="CHEBI:32551"/>
        <dbReference type="ChEBI" id="CHEBI:33019"/>
        <dbReference type="ChEBI" id="CHEBI:82748"/>
        <dbReference type="ChEBI" id="CHEBI:83665"/>
        <dbReference type="ChEBI" id="CHEBI:456215"/>
        <dbReference type="EC" id="6.3.4.19"/>
    </reaction>
</comment>
<comment type="subcellular location">
    <subcellularLocation>
        <location evidence="1">Cytoplasm</location>
    </subcellularLocation>
</comment>
<comment type="domain">
    <text>The N-terminal region contains the highly conserved SGGXDS motif, predicted to be a P-loop motif involved in ATP binding.</text>
</comment>
<comment type="similarity">
    <text evidence="4">Belongs to the tRNA(Ile)-lysidine synthase family.</text>
</comment>
<evidence type="ECO:0000250" key="1"/>
<evidence type="ECO:0000255" key="2"/>
<evidence type="ECO:0000255" key="3">
    <source>
        <dbReference type="PROSITE-ProRule" id="PRU01083"/>
    </source>
</evidence>
<evidence type="ECO:0000305" key="4"/>
<dbReference type="EC" id="6.3.4.19"/>
<dbReference type="EMBL" id="AE017221">
    <property type="protein sequence ID" value="AAS81518.1"/>
    <property type="molecule type" value="Genomic_DNA"/>
</dbReference>
<dbReference type="RefSeq" id="WP_011173587.1">
    <property type="nucleotide sequence ID" value="NC_005835.1"/>
</dbReference>
<dbReference type="SMR" id="Q72IF6"/>
<dbReference type="KEGG" id="tth:TT_C1176"/>
<dbReference type="eggNOG" id="COG0037">
    <property type="taxonomic scope" value="Bacteria"/>
</dbReference>
<dbReference type="eggNOG" id="COG0590">
    <property type="taxonomic scope" value="Bacteria"/>
</dbReference>
<dbReference type="HOGENOM" id="CLU_018869_0_1_0"/>
<dbReference type="OrthoDB" id="9807403at2"/>
<dbReference type="Proteomes" id="UP000000592">
    <property type="component" value="Chromosome"/>
</dbReference>
<dbReference type="GO" id="GO:0005737">
    <property type="term" value="C:cytoplasm"/>
    <property type="evidence" value="ECO:0007669"/>
    <property type="project" value="UniProtKB-SubCell"/>
</dbReference>
<dbReference type="GO" id="GO:0005524">
    <property type="term" value="F:ATP binding"/>
    <property type="evidence" value="ECO:0007669"/>
    <property type="project" value="UniProtKB-UniRule"/>
</dbReference>
<dbReference type="GO" id="GO:0016787">
    <property type="term" value="F:hydrolase activity"/>
    <property type="evidence" value="ECO:0007669"/>
    <property type="project" value="InterPro"/>
</dbReference>
<dbReference type="GO" id="GO:0032267">
    <property type="term" value="F:tRNA(Ile)-lysidine synthase activity"/>
    <property type="evidence" value="ECO:0007669"/>
    <property type="project" value="UniProtKB-EC"/>
</dbReference>
<dbReference type="GO" id="GO:0008270">
    <property type="term" value="F:zinc ion binding"/>
    <property type="evidence" value="ECO:0007669"/>
    <property type="project" value="InterPro"/>
</dbReference>
<dbReference type="GO" id="GO:0006400">
    <property type="term" value="P:tRNA modification"/>
    <property type="evidence" value="ECO:0007669"/>
    <property type="project" value="UniProtKB-UniRule"/>
</dbReference>
<dbReference type="CDD" id="cd01285">
    <property type="entry name" value="nucleoside_deaminase"/>
    <property type="match status" value="1"/>
</dbReference>
<dbReference type="CDD" id="cd01992">
    <property type="entry name" value="TilS_N"/>
    <property type="match status" value="1"/>
</dbReference>
<dbReference type="Gene3D" id="3.40.140.10">
    <property type="entry name" value="Cytidine Deaminase, domain 2"/>
    <property type="match status" value="1"/>
</dbReference>
<dbReference type="Gene3D" id="3.40.50.620">
    <property type="entry name" value="HUPs"/>
    <property type="match status" value="1"/>
</dbReference>
<dbReference type="HAMAP" id="MF_01161">
    <property type="entry name" value="tRNA_Ile_lys_synt"/>
    <property type="match status" value="1"/>
</dbReference>
<dbReference type="InterPro" id="IPR016192">
    <property type="entry name" value="APOBEC/CMP_deaminase_Zn-bd"/>
</dbReference>
<dbReference type="InterPro" id="IPR002125">
    <property type="entry name" value="CMP_dCMP_dom"/>
</dbReference>
<dbReference type="InterPro" id="IPR016193">
    <property type="entry name" value="Cytidine_deaminase-like"/>
</dbReference>
<dbReference type="InterPro" id="IPR014729">
    <property type="entry name" value="Rossmann-like_a/b/a_fold"/>
</dbReference>
<dbReference type="InterPro" id="IPR011063">
    <property type="entry name" value="TilS/TtcA_N"/>
</dbReference>
<dbReference type="InterPro" id="IPR012094">
    <property type="entry name" value="tRNA_Ile_lys_synt"/>
</dbReference>
<dbReference type="InterPro" id="IPR012795">
    <property type="entry name" value="tRNA_Ile_lys_synt_N"/>
</dbReference>
<dbReference type="NCBIfam" id="TIGR02432">
    <property type="entry name" value="lysidine_TilS_N"/>
    <property type="match status" value="1"/>
</dbReference>
<dbReference type="PANTHER" id="PTHR43033">
    <property type="entry name" value="TRNA(ILE)-LYSIDINE SYNTHASE-RELATED"/>
    <property type="match status" value="1"/>
</dbReference>
<dbReference type="PANTHER" id="PTHR43033:SF1">
    <property type="entry name" value="TRNA(ILE)-LYSIDINE SYNTHASE-RELATED"/>
    <property type="match status" value="1"/>
</dbReference>
<dbReference type="Pfam" id="PF01171">
    <property type="entry name" value="ATP_bind_3"/>
    <property type="match status" value="1"/>
</dbReference>
<dbReference type="Pfam" id="PF00383">
    <property type="entry name" value="dCMP_cyt_deam_1"/>
    <property type="match status" value="1"/>
</dbReference>
<dbReference type="SUPFAM" id="SSF52402">
    <property type="entry name" value="Adenine nucleotide alpha hydrolases-like"/>
    <property type="match status" value="1"/>
</dbReference>
<dbReference type="SUPFAM" id="SSF53927">
    <property type="entry name" value="Cytidine deaminase-like"/>
    <property type="match status" value="1"/>
</dbReference>
<dbReference type="SUPFAM" id="SSF82829">
    <property type="entry name" value="MesJ substrate recognition domain-like"/>
    <property type="match status" value="1"/>
</dbReference>
<dbReference type="PROSITE" id="PS00903">
    <property type="entry name" value="CYT_DCMP_DEAMINASES_1"/>
    <property type="match status" value="1"/>
</dbReference>
<dbReference type="PROSITE" id="PS51747">
    <property type="entry name" value="CYT_DCMP_DEAMINASES_2"/>
    <property type="match status" value="1"/>
</dbReference>
<organism>
    <name type="scientific">Thermus thermophilus (strain ATCC BAA-163 / DSM 7039 / HB27)</name>
    <dbReference type="NCBI Taxonomy" id="262724"/>
    <lineage>
        <taxon>Bacteria</taxon>
        <taxon>Thermotogati</taxon>
        <taxon>Deinococcota</taxon>
        <taxon>Deinococci</taxon>
        <taxon>Thermales</taxon>
        <taxon>Thermaceae</taxon>
        <taxon>Thermus</taxon>
    </lineage>
</organism>